<organism>
    <name type="scientific">Blochmanniella floridana</name>
    <dbReference type="NCBI Taxonomy" id="203907"/>
    <lineage>
        <taxon>Bacteria</taxon>
        <taxon>Pseudomonadati</taxon>
        <taxon>Pseudomonadota</taxon>
        <taxon>Gammaproteobacteria</taxon>
        <taxon>Enterobacterales</taxon>
        <taxon>Enterobacteriaceae</taxon>
        <taxon>ant endosymbionts</taxon>
        <taxon>Candidatus Blochmanniella</taxon>
    </lineage>
</organism>
<sequence>MSDLSNFDVIIVGGGHAGTESALASSRMKCKTLLITHNVDTIGQMSCNPSIGGIGKGHLVKEVDAMGGIMAKAIDQSGIQFRILNTRKGAAVKSTRAQADKILYRQAIRHALEIQDSLFILQASVEDLIIKQNKVIGVVIPKIAIEIYAKSVVLTTGTFLNGKIHIGMNNFKGGRSGDLESSSSLSQKLRDLSFRINRLKTGTSPRIHAKGVNFDCMSVQNSDSPLPVFSFTGSFEQHPKQIPCYSTYTNKKTHDIIRLNLNQSPVYSGLINGISPRYCPSIEDKVVRFSDRDAHQVFLEPEGLTTSEIYVNGVSTSLPFNIQTEIIHSIFGLENAHIIRPGYAIEYDFFDPRDLKLTLESKFISGLFLSGQINGTTGYEEAAAQGILAGINAARYVQNKPGWYPRRDQAYLGVLVDDLCTYGTKEPYRMFTSRSEYRLSLREDNADLRLTTVAREFGLIDDNRWRIFCLKQENIEKERQRLRNTYIFPYSEDIVQLNRFLNSPIKNKVSGEDLLKRPEMNYVKLMQLNTFQSVKLDYQVFEQVEIQIKYSGYLLRQQEEIKKYLYYENTLLPIDINYHDIAGLSKEVIDKFNDCRPYSIGQASRIPGVTPAAISNVLIWLKKQGLLKKNVKCT</sequence>
<reference key="1">
    <citation type="journal article" date="2003" name="Proc. Natl. Acad. Sci. U.S.A.">
        <title>The genome sequence of Blochmannia floridanus: comparative analysis of reduced genomes.</title>
        <authorList>
            <person name="Gil R."/>
            <person name="Silva F.J."/>
            <person name="Zientz E."/>
            <person name="Delmotte F."/>
            <person name="Gonzalez-Candelas F."/>
            <person name="Latorre A."/>
            <person name="Rausell C."/>
            <person name="Kamerbeek J."/>
            <person name="Gadau J."/>
            <person name="Hoelldobler B."/>
            <person name="van Ham R.C.H.J."/>
            <person name="Gross R."/>
            <person name="Moya A."/>
        </authorList>
    </citation>
    <scope>NUCLEOTIDE SEQUENCE [LARGE SCALE GENOMIC DNA]</scope>
</reference>
<protein>
    <recommendedName>
        <fullName evidence="1">tRNA uridine 5-carboxymethylaminomethyl modification enzyme MnmG</fullName>
    </recommendedName>
    <alternativeName>
        <fullName evidence="1">Glucose-inhibited division protein A</fullName>
    </alternativeName>
</protein>
<proteinExistence type="inferred from homology"/>
<comment type="function">
    <text evidence="1">NAD-binding protein involved in the addition of a carboxymethylaminomethyl (cmnm) group at the wobble position (U34) of certain tRNAs, forming tRNA-cmnm(5)s(2)U34.</text>
</comment>
<comment type="cofactor">
    <cofactor evidence="1">
        <name>FAD</name>
        <dbReference type="ChEBI" id="CHEBI:57692"/>
    </cofactor>
</comment>
<comment type="subunit">
    <text evidence="1">Homodimer. Heterotetramer of two MnmE and two MnmG subunits.</text>
</comment>
<comment type="subcellular location">
    <subcellularLocation>
        <location evidence="1">Cytoplasm</location>
    </subcellularLocation>
</comment>
<comment type="similarity">
    <text evidence="1">Belongs to the MnmG family.</text>
</comment>
<dbReference type="EMBL" id="BX248583">
    <property type="protein sequence ID" value="CAD83529.1"/>
    <property type="molecule type" value="Genomic_DNA"/>
</dbReference>
<dbReference type="SMR" id="Q7VQW3"/>
<dbReference type="STRING" id="203907.Bfl001"/>
<dbReference type="KEGG" id="bfl:Bfl001"/>
<dbReference type="eggNOG" id="COG0445">
    <property type="taxonomic scope" value="Bacteria"/>
</dbReference>
<dbReference type="HOGENOM" id="CLU_007831_2_2_6"/>
<dbReference type="OrthoDB" id="9815560at2"/>
<dbReference type="Proteomes" id="UP000002192">
    <property type="component" value="Chromosome"/>
</dbReference>
<dbReference type="GO" id="GO:0005829">
    <property type="term" value="C:cytosol"/>
    <property type="evidence" value="ECO:0007669"/>
    <property type="project" value="TreeGrafter"/>
</dbReference>
<dbReference type="GO" id="GO:0050660">
    <property type="term" value="F:flavin adenine dinucleotide binding"/>
    <property type="evidence" value="ECO:0007669"/>
    <property type="project" value="UniProtKB-UniRule"/>
</dbReference>
<dbReference type="GO" id="GO:0030488">
    <property type="term" value="P:tRNA methylation"/>
    <property type="evidence" value="ECO:0007669"/>
    <property type="project" value="TreeGrafter"/>
</dbReference>
<dbReference type="GO" id="GO:0002098">
    <property type="term" value="P:tRNA wobble uridine modification"/>
    <property type="evidence" value="ECO:0007669"/>
    <property type="project" value="InterPro"/>
</dbReference>
<dbReference type="FunFam" id="1.10.10.1800:FF:000001">
    <property type="entry name" value="tRNA uridine 5-carboxymethylaminomethyl modification enzyme MnmG"/>
    <property type="match status" value="1"/>
</dbReference>
<dbReference type="FunFam" id="1.10.150.570:FF:000001">
    <property type="entry name" value="tRNA uridine 5-carboxymethylaminomethyl modification enzyme MnmG"/>
    <property type="match status" value="1"/>
</dbReference>
<dbReference type="FunFam" id="3.50.50.60:FF:000002">
    <property type="entry name" value="tRNA uridine 5-carboxymethylaminomethyl modification enzyme MnmG"/>
    <property type="match status" value="1"/>
</dbReference>
<dbReference type="FunFam" id="3.50.50.60:FF:000010">
    <property type="entry name" value="tRNA uridine 5-carboxymethylaminomethyl modification enzyme MnmG"/>
    <property type="match status" value="1"/>
</dbReference>
<dbReference type="Gene3D" id="3.50.50.60">
    <property type="entry name" value="FAD/NAD(P)-binding domain"/>
    <property type="match status" value="2"/>
</dbReference>
<dbReference type="Gene3D" id="1.10.150.570">
    <property type="entry name" value="GidA associated domain, C-terminal subdomain"/>
    <property type="match status" value="1"/>
</dbReference>
<dbReference type="Gene3D" id="1.10.10.1800">
    <property type="entry name" value="tRNA uridine 5-carboxymethylaminomethyl modification enzyme MnmG/GidA"/>
    <property type="match status" value="1"/>
</dbReference>
<dbReference type="HAMAP" id="MF_00129">
    <property type="entry name" value="MnmG_GidA"/>
    <property type="match status" value="1"/>
</dbReference>
<dbReference type="InterPro" id="IPR036188">
    <property type="entry name" value="FAD/NAD-bd_sf"/>
</dbReference>
<dbReference type="InterPro" id="IPR049312">
    <property type="entry name" value="GIDA_C_N"/>
</dbReference>
<dbReference type="InterPro" id="IPR004416">
    <property type="entry name" value="MnmG"/>
</dbReference>
<dbReference type="InterPro" id="IPR002218">
    <property type="entry name" value="MnmG-rel"/>
</dbReference>
<dbReference type="InterPro" id="IPR020595">
    <property type="entry name" value="MnmG-rel_CS"/>
</dbReference>
<dbReference type="InterPro" id="IPR026904">
    <property type="entry name" value="MnmG_C"/>
</dbReference>
<dbReference type="InterPro" id="IPR047001">
    <property type="entry name" value="MnmG_C_subdom"/>
</dbReference>
<dbReference type="InterPro" id="IPR044920">
    <property type="entry name" value="MnmG_C_subdom_sf"/>
</dbReference>
<dbReference type="InterPro" id="IPR040131">
    <property type="entry name" value="MnmG_N"/>
</dbReference>
<dbReference type="NCBIfam" id="TIGR00136">
    <property type="entry name" value="mnmG_gidA"/>
    <property type="match status" value="1"/>
</dbReference>
<dbReference type="PANTHER" id="PTHR11806">
    <property type="entry name" value="GLUCOSE INHIBITED DIVISION PROTEIN A"/>
    <property type="match status" value="1"/>
</dbReference>
<dbReference type="PANTHER" id="PTHR11806:SF0">
    <property type="entry name" value="PROTEIN MTO1 HOMOLOG, MITOCHONDRIAL"/>
    <property type="match status" value="1"/>
</dbReference>
<dbReference type="Pfam" id="PF01134">
    <property type="entry name" value="GIDA"/>
    <property type="match status" value="1"/>
</dbReference>
<dbReference type="Pfam" id="PF21680">
    <property type="entry name" value="GIDA_C_1st"/>
    <property type="match status" value="1"/>
</dbReference>
<dbReference type="Pfam" id="PF13932">
    <property type="entry name" value="SAM_GIDA_C"/>
    <property type="match status" value="1"/>
</dbReference>
<dbReference type="SMART" id="SM01228">
    <property type="entry name" value="GIDA_assoc_3"/>
    <property type="match status" value="1"/>
</dbReference>
<dbReference type="SUPFAM" id="SSF51905">
    <property type="entry name" value="FAD/NAD(P)-binding domain"/>
    <property type="match status" value="1"/>
</dbReference>
<dbReference type="PROSITE" id="PS01280">
    <property type="entry name" value="GIDA_1"/>
    <property type="match status" value="1"/>
</dbReference>
<feature type="chain" id="PRO_0000117062" description="tRNA uridine 5-carboxymethylaminomethyl modification enzyme MnmG">
    <location>
        <begin position="1"/>
        <end position="634"/>
    </location>
</feature>
<feature type="binding site" evidence="1">
    <location>
        <begin position="13"/>
        <end position="18"/>
    </location>
    <ligand>
        <name>FAD</name>
        <dbReference type="ChEBI" id="CHEBI:57692"/>
    </ligand>
</feature>
<feature type="binding site" evidence="1">
    <location>
        <position position="125"/>
    </location>
    <ligand>
        <name>FAD</name>
        <dbReference type="ChEBI" id="CHEBI:57692"/>
    </ligand>
</feature>
<feature type="binding site" evidence="1">
    <location>
        <position position="182"/>
    </location>
    <ligand>
        <name>FAD</name>
        <dbReference type="ChEBI" id="CHEBI:57692"/>
    </ligand>
</feature>
<feature type="binding site" evidence="1">
    <location>
        <begin position="275"/>
        <end position="289"/>
    </location>
    <ligand>
        <name>NAD(+)</name>
        <dbReference type="ChEBI" id="CHEBI:57540"/>
    </ligand>
</feature>
<feature type="binding site" evidence="1">
    <location>
        <position position="372"/>
    </location>
    <ligand>
        <name>FAD</name>
        <dbReference type="ChEBI" id="CHEBI:57692"/>
    </ligand>
</feature>
<accession>Q7VQW3</accession>
<keyword id="KW-0963">Cytoplasm</keyword>
<keyword id="KW-0274">FAD</keyword>
<keyword id="KW-0285">Flavoprotein</keyword>
<keyword id="KW-0520">NAD</keyword>
<keyword id="KW-1185">Reference proteome</keyword>
<keyword id="KW-0819">tRNA processing</keyword>
<evidence type="ECO:0000255" key="1">
    <source>
        <dbReference type="HAMAP-Rule" id="MF_00129"/>
    </source>
</evidence>
<gene>
    <name evidence="1" type="primary">mnmG</name>
    <name evidence="1" type="synonym">gidA</name>
    <name type="ordered locus">Bfl001</name>
</gene>
<name>MNMG_BLOFL</name>